<sequence>MIIDRVQVEAINSFSNLELLKEVYGLIWILPILTLLLGITIEVLVIVWLEREISASIQQRIGPEYAGPLGLLQAIADGTKLLFKEDILPSRGDIPLFSIGPSIAVISILLSFLVIPLGYRFVLADLSIGVFLWIAISSIAPIGLLMAGYSSNNKYSFLGGLRAAAQSISYEIPLTFCVLAISLLSNSLSTVDIVEAQSKYGFFGWNLWRQPIGFLVFLISSLAECERLPFDLPEAEEELVAGYQTEYSGIKYGLFYLVSYLNLLVSSLFVTVLYLGGWNLSIPYISFFGFFQMNKMVGILEMTMSIFITLTKAYLFLFISITIRWTLPRMRMDQLLNLGWKFLLPISLGNLLLTTSFQLVSL</sequence>
<organism>
    <name type="scientific">Oryza sativa subsp. japonica</name>
    <name type="common">Rice</name>
    <dbReference type="NCBI Taxonomy" id="39947"/>
    <lineage>
        <taxon>Eukaryota</taxon>
        <taxon>Viridiplantae</taxon>
        <taxon>Streptophyta</taxon>
        <taxon>Embryophyta</taxon>
        <taxon>Tracheophyta</taxon>
        <taxon>Spermatophyta</taxon>
        <taxon>Magnoliopsida</taxon>
        <taxon>Liliopsida</taxon>
        <taxon>Poales</taxon>
        <taxon>Poaceae</taxon>
        <taxon>BOP clade</taxon>
        <taxon>Oryzoideae</taxon>
        <taxon>Oryzeae</taxon>
        <taxon>Oryzinae</taxon>
        <taxon>Oryza</taxon>
        <taxon>Oryza sativa</taxon>
    </lineage>
</organism>
<geneLocation type="chloroplast"/>
<protein>
    <recommendedName>
        <fullName evidence="2">NAD(P)H-quinone oxidoreductase subunit 1, chloroplastic</fullName>
        <ecNumber evidence="2">7.1.1.-</ecNumber>
    </recommendedName>
    <alternativeName>
        <fullName evidence="2">NAD(P)H dehydrogenase subunit 1</fullName>
        <shortName evidence="2">NDH subunit 1</shortName>
    </alternativeName>
    <alternativeName>
        <fullName evidence="2">NADH-plastoquinone oxidoreductase subunit 1</fullName>
    </alternativeName>
</protein>
<proteinExistence type="inferred from homology"/>
<feature type="chain" id="PRO_0000117514" description="NAD(P)H-quinone oxidoreductase subunit 1, chloroplastic">
    <location>
        <begin position="1"/>
        <end position="362"/>
    </location>
</feature>
<feature type="transmembrane region" description="Helical" evidence="2">
    <location>
        <begin position="27"/>
        <end position="47"/>
    </location>
</feature>
<feature type="transmembrane region" description="Helical" evidence="2">
    <location>
        <begin position="94"/>
        <end position="114"/>
    </location>
</feature>
<feature type="transmembrane region" description="Helical" evidence="2">
    <location>
        <begin position="128"/>
        <end position="148"/>
    </location>
</feature>
<feature type="transmembrane region" description="Helical" evidence="2">
    <location>
        <begin position="164"/>
        <end position="184"/>
    </location>
</feature>
<feature type="transmembrane region" description="Helical" evidence="2">
    <location>
        <begin position="202"/>
        <end position="222"/>
    </location>
</feature>
<feature type="transmembrane region" description="Helical" evidence="2">
    <location>
        <begin position="247"/>
        <end position="267"/>
    </location>
</feature>
<feature type="transmembrane region" description="Helical" evidence="2">
    <location>
        <begin position="303"/>
        <end position="323"/>
    </location>
</feature>
<feature type="transmembrane region" description="Helical" evidence="2">
    <location>
        <begin position="335"/>
        <end position="355"/>
    </location>
</feature>
<accession>P12124</accession>
<reference key="1">
    <citation type="journal article" date="1989" name="Mol. Gen. Genet.">
        <title>The complete sequence of the rice (Oryza sativa) chloroplast genome: intermolecular recombination between distinct tRNA genes accounts for a major plastid DNA inversion during the evolution of the cereals.</title>
        <authorList>
            <person name="Hiratsuka J."/>
            <person name="Shimada H."/>
            <person name="Whittier R."/>
            <person name="Ishibashi T."/>
            <person name="Sakamoto M."/>
            <person name="Mori M."/>
            <person name="Kondo C."/>
            <person name="Honji Y."/>
            <person name="Sun C.-R."/>
            <person name="Meng B.-Y."/>
            <person name="Li Y.-Q."/>
            <person name="Kanno A."/>
            <person name="Nishizawa Y."/>
            <person name="Hirai A."/>
            <person name="Shinozaki K."/>
            <person name="Sugiura M."/>
        </authorList>
    </citation>
    <scope>NUCLEOTIDE SEQUENCE [LARGE SCALE GENOMIC DNA]</scope>
    <source>
        <strain>cv. Nipponbare</strain>
    </source>
</reference>
<reference key="2">
    <citation type="journal article" date="2004" name="Plant Physiol.">
        <title>A comparison of rice chloroplast genomes.</title>
        <authorList>
            <person name="Tang J."/>
            <person name="Xia H."/>
            <person name="Cao M."/>
            <person name="Zhang X."/>
            <person name="Zeng W."/>
            <person name="Hu S."/>
            <person name="Tong W."/>
            <person name="Wang J."/>
            <person name="Wang J."/>
            <person name="Yu J."/>
            <person name="Yang H."/>
            <person name="Zhu L."/>
        </authorList>
    </citation>
    <scope>NUCLEOTIDE SEQUENCE [LARGE SCALE GENOMIC DNA]</scope>
    <source>
        <strain>cv. Nipponbare</strain>
    </source>
</reference>
<gene>
    <name evidence="2" type="primary">ndhA</name>
    <name type="ORF">Nip174</name>
</gene>
<name>NU1C_ORYSJ</name>
<dbReference type="EC" id="7.1.1.-" evidence="2"/>
<dbReference type="EMBL" id="X15901">
    <property type="protein sequence ID" value="CAA33910.1"/>
    <property type="molecule type" value="Genomic_DNA"/>
</dbReference>
<dbReference type="EMBL" id="AY522330">
    <property type="status" value="NOT_ANNOTATED_CDS"/>
    <property type="molecule type" value="Genomic_DNA"/>
</dbReference>
<dbReference type="PIR" id="JQ0293">
    <property type="entry name" value="DERZN1"/>
</dbReference>
<dbReference type="RefSeq" id="NP_039449.1">
    <property type="nucleotide sequence ID" value="NC_001320.1"/>
</dbReference>
<dbReference type="SMR" id="P12124"/>
<dbReference type="FunCoup" id="P12124">
    <property type="interactions" value="27"/>
</dbReference>
<dbReference type="STRING" id="39947.P12124"/>
<dbReference type="PaxDb" id="39947-P12124"/>
<dbReference type="GeneID" id="3131395"/>
<dbReference type="KEGG" id="dosa:ndhA"/>
<dbReference type="KEGG" id="osa:3131395"/>
<dbReference type="InParanoid" id="P12124"/>
<dbReference type="OrthoDB" id="1913704at2759"/>
<dbReference type="Proteomes" id="UP000059680">
    <property type="component" value="Chloroplast"/>
</dbReference>
<dbReference type="GO" id="GO:0009535">
    <property type="term" value="C:chloroplast thylakoid membrane"/>
    <property type="evidence" value="ECO:0007669"/>
    <property type="project" value="UniProtKB-SubCell"/>
</dbReference>
<dbReference type="GO" id="GO:0009536">
    <property type="term" value="C:plastid"/>
    <property type="evidence" value="ECO:0000250"/>
    <property type="project" value="Gramene"/>
</dbReference>
<dbReference type="GO" id="GO:0016655">
    <property type="term" value="F:oxidoreductase activity, acting on NAD(P)H, quinone or similar compound as acceptor"/>
    <property type="evidence" value="ECO:0007669"/>
    <property type="project" value="UniProtKB-UniRule"/>
</dbReference>
<dbReference type="GO" id="GO:0048038">
    <property type="term" value="F:quinone binding"/>
    <property type="evidence" value="ECO:0007669"/>
    <property type="project" value="UniProtKB-KW"/>
</dbReference>
<dbReference type="GO" id="GO:0009060">
    <property type="term" value="P:aerobic respiration"/>
    <property type="evidence" value="ECO:0000318"/>
    <property type="project" value="GO_Central"/>
</dbReference>
<dbReference type="GO" id="GO:0019684">
    <property type="term" value="P:photosynthesis, light reaction"/>
    <property type="evidence" value="ECO:0007669"/>
    <property type="project" value="UniProtKB-UniRule"/>
</dbReference>
<dbReference type="HAMAP" id="MF_01350">
    <property type="entry name" value="NDH1_NuoH"/>
    <property type="match status" value="1"/>
</dbReference>
<dbReference type="InterPro" id="IPR001694">
    <property type="entry name" value="NADH_UbQ_OxRdtase_su1/FPO"/>
</dbReference>
<dbReference type="InterPro" id="IPR018086">
    <property type="entry name" value="NADH_UbQ_OxRdtase_su1_CS"/>
</dbReference>
<dbReference type="NCBIfam" id="NF004741">
    <property type="entry name" value="PRK06076.1-2"/>
    <property type="match status" value="1"/>
</dbReference>
<dbReference type="PANTHER" id="PTHR11432">
    <property type="entry name" value="NADH DEHYDROGENASE SUBUNIT 1"/>
    <property type="match status" value="1"/>
</dbReference>
<dbReference type="PANTHER" id="PTHR11432:SF3">
    <property type="entry name" value="NADH-UBIQUINONE OXIDOREDUCTASE CHAIN 1"/>
    <property type="match status" value="1"/>
</dbReference>
<dbReference type="Pfam" id="PF00146">
    <property type="entry name" value="NADHdh"/>
    <property type="match status" value="1"/>
</dbReference>
<dbReference type="PROSITE" id="PS00667">
    <property type="entry name" value="COMPLEX1_ND1_1"/>
    <property type="match status" value="1"/>
</dbReference>
<dbReference type="PROSITE" id="PS00668">
    <property type="entry name" value="COMPLEX1_ND1_2"/>
    <property type="match status" value="1"/>
</dbReference>
<keyword id="KW-0150">Chloroplast</keyword>
<keyword id="KW-0472">Membrane</keyword>
<keyword id="KW-0520">NAD</keyword>
<keyword id="KW-0521">NADP</keyword>
<keyword id="KW-0934">Plastid</keyword>
<keyword id="KW-0618">Plastoquinone</keyword>
<keyword id="KW-0874">Quinone</keyword>
<keyword id="KW-1185">Reference proteome</keyword>
<keyword id="KW-0691">RNA editing</keyword>
<keyword id="KW-0793">Thylakoid</keyword>
<keyword id="KW-1278">Translocase</keyword>
<keyword id="KW-0812">Transmembrane</keyword>
<keyword id="KW-1133">Transmembrane helix</keyword>
<comment type="function">
    <text evidence="2">NDH shuttles electrons from NAD(P)H:plastoquinone, via FMN and iron-sulfur (Fe-S) centers, to quinones in the photosynthetic chain and possibly in a chloroplast respiratory chain. The immediate electron acceptor for the enzyme in this species is believed to be plastoquinone. Couples the redox reaction to proton translocation, and thus conserves the redox energy in a proton gradient.</text>
</comment>
<comment type="catalytic activity">
    <reaction evidence="2">
        <text>a plastoquinone + NADH + (n+1) H(+)(in) = a plastoquinol + NAD(+) + n H(+)(out)</text>
        <dbReference type="Rhea" id="RHEA:42608"/>
        <dbReference type="Rhea" id="RHEA-COMP:9561"/>
        <dbReference type="Rhea" id="RHEA-COMP:9562"/>
        <dbReference type="ChEBI" id="CHEBI:15378"/>
        <dbReference type="ChEBI" id="CHEBI:17757"/>
        <dbReference type="ChEBI" id="CHEBI:57540"/>
        <dbReference type="ChEBI" id="CHEBI:57945"/>
        <dbReference type="ChEBI" id="CHEBI:62192"/>
    </reaction>
</comment>
<comment type="catalytic activity">
    <reaction evidence="2">
        <text>a plastoquinone + NADPH + (n+1) H(+)(in) = a plastoquinol + NADP(+) + n H(+)(out)</text>
        <dbReference type="Rhea" id="RHEA:42612"/>
        <dbReference type="Rhea" id="RHEA-COMP:9561"/>
        <dbReference type="Rhea" id="RHEA-COMP:9562"/>
        <dbReference type="ChEBI" id="CHEBI:15378"/>
        <dbReference type="ChEBI" id="CHEBI:17757"/>
        <dbReference type="ChEBI" id="CHEBI:57783"/>
        <dbReference type="ChEBI" id="CHEBI:58349"/>
        <dbReference type="ChEBI" id="CHEBI:62192"/>
    </reaction>
</comment>
<comment type="subunit">
    <text evidence="2">NDH is composed of at least 16 different subunits, 5 of which are encoded in the nucleus.</text>
</comment>
<comment type="subcellular location">
    <subcellularLocation>
        <location evidence="2">Plastid</location>
        <location evidence="2">Chloroplast thylakoid membrane</location>
        <topology evidence="2">Multi-pass membrane protein</topology>
    </subcellularLocation>
</comment>
<comment type="RNA editing">
    <location>
        <position position="158" evidence="1"/>
    </location>
    <location>
        <position position="188" evidence="1"/>
    </location>
    <location>
        <position position="357" evidence="1"/>
    </location>
</comment>
<comment type="similarity">
    <text evidence="2">Belongs to the complex I subunit 1 family.</text>
</comment>
<evidence type="ECO:0000250" key="1"/>
<evidence type="ECO:0000255" key="2">
    <source>
        <dbReference type="HAMAP-Rule" id="MF_01350"/>
    </source>
</evidence>